<protein>
    <recommendedName>
        <fullName evidence="1">Ribosome-binding factor A</fullName>
    </recommendedName>
</protein>
<reference key="1">
    <citation type="journal article" date="2006" name="Proc. Natl. Acad. Sci. U.S.A.">
        <title>The complete genome of Rhodococcus sp. RHA1 provides insights into a catabolic powerhouse.</title>
        <authorList>
            <person name="McLeod M.P."/>
            <person name="Warren R.L."/>
            <person name="Hsiao W.W.L."/>
            <person name="Araki N."/>
            <person name="Myhre M."/>
            <person name="Fernandes C."/>
            <person name="Miyazawa D."/>
            <person name="Wong W."/>
            <person name="Lillquist A.L."/>
            <person name="Wang D."/>
            <person name="Dosanjh M."/>
            <person name="Hara H."/>
            <person name="Petrescu A."/>
            <person name="Morin R.D."/>
            <person name="Yang G."/>
            <person name="Stott J.M."/>
            <person name="Schein J.E."/>
            <person name="Shin H."/>
            <person name="Smailus D."/>
            <person name="Siddiqui A.S."/>
            <person name="Marra M.A."/>
            <person name="Jones S.J.M."/>
            <person name="Holt R."/>
            <person name="Brinkman F.S.L."/>
            <person name="Miyauchi K."/>
            <person name="Fukuda M."/>
            <person name="Davies J.E."/>
            <person name="Mohn W.W."/>
            <person name="Eltis L.D."/>
        </authorList>
    </citation>
    <scope>NUCLEOTIDE SEQUENCE [LARGE SCALE GENOMIC DNA]</scope>
    <source>
        <strain>RHA1</strain>
    </source>
</reference>
<feature type="chain" id="PRO_1000000191" description="Ribosome-binding factor A">
    <location>
        <begin position="1"/>
        <end position="162"/>
    </location>
</feature>
<feature type="region of interest" description="Disordered" evidence="2">
    <location>
        <begin position="121"/>
        <end position="162"/>
    </location>
</feature>
<feature type="compositionally biased region" description="Low complexity" evidence="2">
    <location>
        <begin position="125"/>
        <end position="136"/>
    </location>
</feature>
<accession>Q0S217</accession>
<name>RBFA_RHOJR</name>
<comment type="function">
    <text evidence="1">One of several proteins that assist in the late maturation steps of the functional core of the 30S ribosomal subunit. Associates with free 30S ribosomal subunits (but not with 30S subunits that are part of 70S ribosomes or polysomes). Required for efficient processing of 16S rRNA. May interact with the 5'-terminal helix region of 16S rRNA.</text>
</comment>
<comment type="subunit">
    <text evidence="1">Monomer. Binds 30S ribosomal subunits, but not 50S ribosomal subunits or 70S ribosomes.</text>
</comment>
<comment type="subcellular location">
    <subcellularLocation>
        <location evidence="1">Cytoplasm</location>
    </subcellularLocation>
</comment>
<comment type="similarity">
    <text evidence="1">Belongs to the RbfA family.</text>
</comment>
<dbReference type="EMBL" id="CP000431">
    <property type="protein sequence ID" value="ABG98419.1"/>
    <property type="molecule type" value="Genomic_DNA"/>
</dbReference>
<dbReference type="RefSeq" id="WP_009479808.1">
    <property type="nucleotide sequence ID" value="NC_008268.1"/>
</dbReference>
<dbReference type="SMR" id="Q0S217"/>
<dbReference type="KEGG" id="rha:RHA1_ro06646"/>
<dbReference type="eggNOG" id="COG0858">
    <property type="taxonomic scope" value="Bacteria"/>
</dbReference>
<dbReference type="HOGENOM" id="CLU_089475_0_0_11"/>
<dbReference type="OrthoDB" id="307788at2"/>
<dbReference type="Proteomes" id="UP000008710">
    <property type="component" value="Chromosome"/>
</dbReference>
<dbReference type="GO" id="GO:0005829">
    <property type="term" value="C:cytosol"/>
    <property type="evidence" value="ECO:0007669"/>
    <property type="project" value="TreeGrafter"/>
</dbReference>
<dbReference type="GO" id="GO:0043024">
    <property type="term" value="F:ribosomal small subunit binding"/>
    <property type="evidence" value="ECO:0007669"/>
    <property type="project" value="TreeGrafter"/>
</dbReference>
<dbReference type="GO" id="GO:0030490">
    <property type="term" value="P:maturation of SSU-rRNA"/>
    <property type="evidence" value="ECO:0007669"/>
    <property type="project" value="UniProtKB-UniRule"/>
</dbReference>
<dbReference type="FunFam" id="3.30.300.20:FF:000018">
    <property type="entry name" value="Ribosome-binding factor A"/>
    <property type="match status" value="1"/>
</dbReference>
<dbReference type="Gene3D" id="3.30.300.20">
    <property type="match status" value="1"/>
</dbReference>
<dbReference type="HAMAP" id="MF_00003">
    <property type="entry name" value="RbfA"/>
    <property type="match status" value="1"/>
</dbReference>
<dbReference type="InterPro" id="IPR015946">
    <property type="entry name" value="KH_dom-like_a/b"/>
</dbReference>
<dbReference type="InterPro" id="IPR000238">
    <property type="entry name" value="RbfA"/>
</dbReference>
<dbReference type="InterPro" id="IPR023799">
    <property type="entry name" value="RbfA_dom_sf"/>
</dbReference>
<dbReference type="InterPro" id="IPR020053">
    <property type="entry name" value="Ribosome-bd_factorA_CS"/>
</dbReference>
<dbReference type="NCBIfam" id="TIGR00082">
    <property type="entry name" value="rbfA"/>
    <property type="match status" value="1"/>
</dbReference>
<dbReference type="PANTHER" id="PTHR33515">
    <property type="entry name" value="RIBOSOME-BINDING FACTOR A, CHLOROPLASTIC-RELATED"/>
    <property type="match status" value="1"/>
</dbReference>
<dbReference type="PANTHER" id="PTHR33515:SF1">
    <property type="entry name" value="RIBOSOME-BINDING FACTOR A, CHLOROPLASTIC-RELATED"/>
    <property type="match status" value="1"/>
</dbReference>
<dbReference type="Pfam" id="PF02033">
    <property type="entry name" value="RBFA"/>
    <property type="match status" value="1"/>
</dbReference>
<dbReference type="SUPFAM" id="SSF89919">
    <property type="entry name" value="Ribosome-binding factor A, RbfA"/>
    <property type="match status" value="1"/>
</dbReference>
<dbReference type="PROSITE" id="PS01319">
    <property type="entry name" value="RBFA"/>
    <property type="match status" value="1"/>
</dbReference>
<proteinExistence type="inferred from homology"/>
<organism>
    <name type="scientific">Rhodococcus jostii (strain RHA1)</name>
    <dbReference type="NCBI Taxonomy" id="101510"/>
    <lineage>
        <taxon>Bacteria</taxon>
        <taxon>Bacillati</taxon>
        <taxon>Actinomycetota</taxon>
        <taxon>Actinomycetes</taxon>
        <taxon>Mycobacteriales</taxon>
        <taxon>Nocardiaceae</taxon>
        <taxon>Rhodococcus</taxon>
    </lineage>
</organism>
<keyword id="KW-0963">Cytoplasm</keyword>
<keyword id="KW-0690">Ribosome biogenesis</keyword>
<evidence type="ECO:0000255" key="1">
    <source>
        <dbReference type="HAMAP-Rule" id="MF_00003"/>
    </source>
</evidence>
<evidence type="ECO:0000256" key="2">
    <source>
        <dbReference type="SAM" id="MobiDB-lite"/>
    </source>
</evidence>
<gene>
    <name evidence="1" type="primary">rbfA</name>
    <name type="ordered locus">RHA1_ro06646</name>
</gene>
<sequence length="162" mass="17056">MVDPARARKLAKRIGTIVATAIDHEIKDPRLAFVTVTDTKVTADLHDATVYYTVMGADLESEPDLAAAAAGLEKAKGVLRSKVGAGTGVRFTPTLTFVADTVPDTARHMEELLARARAADDEVARVAAGASPAGDPDPYKEPRAEDADDAEVDEPSGSRQAD</sequence>